<proteinExistence type="evidence at protein level"/>
<protein>
    <recommendedName>
        <fullName evidence="1">Pyridoxine 5'-phosphate synthase</fullName>
        <shortName evidence="1">PNP synthase</shortName>
        <ecNumber evidence="1">2.6.99.2</ecNumber>
    </recommendedName>
</protein>
<dbReference type="EC" id="2.6.99.2" evidence="1"/>
<dbReference type="EMBL" id="CP000124">
    <property type="protein sequence ID" value="ABA48208.1"/>
    <property type="molecule type" value="Genomic_DNA"/>
</dbReference>
<dbReference type="RefSeq" id="WP_004524619.1">
    <property type="nucleotide sequence ID" value="NC_007434.1"/>
</dbReference>
<dbReference type="PDB" id="3GK0">
    <property type="method" value="X-ray"/>
    <property type="resolution" value="2.28 A"/>
    <property type="chains" value="A/B/C/D/E/F/G/H=1-257"/>
</dbReference>
<dbReference type="PDBsum" id="3GK0"/>
<dbReference type="SMR" id="Q3JQ80"/>
<dbReference type="EnsemblBacteria" id="ABA48208">
    <property type="protein sequence ID" value="ABA48208"/>
    <property type="gene ID" value="BURPS1710b_2892"/>
</dbReference>
<dbReference type="KEGG" id="bpm:BURPS1710b_2892"/>
<dbReference type="HOGENOM" id="CLU_074563_0_0_4"/>
<dbReference type="UniPathway" id="UPA00244">
    <property type="reaction ID" value="UER00313"/>
</dbReference>
<dbReference type="EvolutionaryTrace" id="Q3JQ80"/>
<dbReference type="Proteomes" id="UP000002700">
    <property type="component" value="Chromosome I"/>
</dbReference>
<dbReference type="GO" id="GO:0005829">
    <property type="term" value="C:cytosol"/>
    <property type="evidence" value="ECO:0007669"/>
    <property type="project" value="TreeGrafter"/>
</dbReference>
<dbReference type="GO" id="GO:0033856">
    <property type="term" value="F:pyridoxine 5'-phosphate synthase activity"/>
    <property type="evidence" value="ECO:0007669"/>
    <property type="project" value="UniProtKB-EC"/>
</dbReference>
<dbReference type="GO" id="GO:0008615">
    <property type="term" value="P:pyridoxine biosynthetic process"/>
    <property type="evidence" value="ECO:0007669"/>
    <property type="project" value="UniProtKB-UniRule"/>
</dbReference>
<dbReference type="CDD" id="cd00003">
    <property type="entry name" value="PNPsynthase"/>
    <property type="match status" value="1"/>
</dbReference>
<dbReference type="FunFam" id="3.20.20.70:FF:000042">
    <property type="entry name" value="Pyridoxine 5'-phosphate synthase"/>
    <property type="match status" value="1"/>
</dbReference>
<dbReference type="Gene3D" id="3.20.20.70">
    <property type="entry name" value="Aldolase class I"/>
    <property type="match status" value="1"/>
</dbReference>
<dbReference type="HAMAP" id="MF_00279">
    <property type="entry name" value="PdxJ"/>
    <property type="match status" value="1"/>
</dbReference>
<dbReference type="InterPro" id="IPR013785">
    <property type="entry name" value="Aldolase_TIM"/>
</dbReference>
<dbReference type="InterPro" id="IPR004569">
    <property type="entry name" value="PyrdxlP_synth_PdxJ"/>
</dbReference>
<dbReference type="InterPro" id="IPR036130">
    <property type="entry name" value="Pyridoxine-5'_phos_synth"/>
</dbReference>
<dbReference type="NCBIfam" id="TIGR00559">
    <property type="entry name" value="pdxJ"/>
    <property type="match status" value="1"/>
</dbReference>
<dbReference type="NCBIfam" id="NF003623">
    <property type="entry name" value="PRK05265.1-1"/>
    <property type="match status" value="1"/>
</dbReference>
<dbReference type="NCBIfam" id="NF003624">
    <property type="entry name" value="PRK05265.1-2"/>
    <property type="match status" value="1"/>
</dbReference>
<dbReference type="NCBIfam" id="NF003625">
    <property type="entry name" value="PRK05265.1-3"/>
    <property type="match status" value="1"/>
</dbReference>
<dbReference type="NCBIfam" id="NF003627">
    <property type="entry name" value="PRK05265.1-5"/>
    <property type="match status" value="1"/>
</dbReference>
<dbReference type="PANTHER" id="PTHR30456">
    <property type="entry name" value="PYRIDOXINE 5'-PHOSPHATE SYNTHASE"/>
    <property type="match status" value="1"/>
</dbReference>
<dbReference type="PANTHER" id="PTHR30456:SF0">
    <property type="entry name" value="PYRIDOXINE 5'-PHOSPHATE SYNTHASE"/>
    <property type="match status" value="1"/>
</dbReference>
<dbReference type="Pfam" id="PF03740">
    <property type="entry name" value="PdxJ"/>
    <property type="match status" value="1"/>
</dbReference>
<dbReference type="SUPFAM" id="SSF63892">
    <property type="entry name" value="Pyridoxine 5'-phosphate synthase"/>
    <property type="match status" value="1"/>
</dbReference>
<evidence type="ECO:0000255" key="1">
    <source>
        <dbReference type="HAMAP-Rule" id="MF_00279"/>
    </source>
</evidence>
<evidence type="ECO:0007829" key="2">
    <source>
        <dbReference type="PDB" id="3GK0"/>
    </source>
</evidence>
<name>PDXJ_BURP1</name>
<keyword id="KW-0002">3D-structure</keyword>
<keyword id="KW-0963">Cytoplasm</keyword>
<keyword id="KW-0664">Pyridoxine biosynthesis</keyword>
<keyword id="KW-0808">Transferase</keyword>
<organism>
    <name type="scientific">Burkholderia pseudomallei (strain 1710b)</name>
    <dbReference type="NCBI Taxonomy" id="320372"/>
    <lineage>
        <taxon>Bacteria</taxon>
        <taxon>Pseudomonadati</taxon>
        <taxon>Pseudomonadota</taxon>
        <taxon>Betaproteobacteria</taxon>
        <taxon>Burkholderiales</taxon>
        <taxon>Burkholderiaceae</taxon>
        <taxon>Burkholderia</taxon>
        <taxon>pseudomallei group</taxon>
    </lineage>
</organism>
<sequence>MSFFLTTPAAIDLGVNIDHVATLRNARGTAYPDPVRAALAAEDAGADAITLHLREDRRHIVDADVRTLRPRVKTRMNLECAVTPEMLDIACEIRPHDACLVPEKRSELTTEGGLDVVGHFDAVRAACKQLADAGVRVSLFIDPDEAQIRAAHETGAPVIELHTGRYADAHDAAEQQREFERIATGVDAGIALGLKVNAGHGLHYTNVQAIAALPGIAELNIGHAIVAHAVFVGWDNAVREMKAIMVAARVAALHGGR</sequence>
<accession>Q3JQ80</accession>
<gene>
    <name evidence="1" type="primary">pdxJ</name>
    <name type="ordered locus">BURPS1710b_2892</name>
</gene>
<comment type="function">
    <text evidence="1">Catalyzes the complicated ring closure reaction between the two acyclic compounds 1-deoxy-D-xylulose-5-phosphate (DXP) and 3-amino-2-oxopropyl phosphate (1-amino-acetone-3-phosphate or AAP) to form pyridoxine 5'-phosphate (PNP) and inorganic phosphate.</text>
</comment>
<comment type="catalytic activity">
    <reaction evidence="1">
        <text>3-amino-2-oxopropyl phosphate + 1-deoxy-D-xylulose 5-phosphate = pyridoxine 5'-phosphate + phosphate + 2 H2O + H(+)</text>
        <dbReference type="Rhea" id="RHEA:15265"/>
        <dbReference type="ChEBI" id="CHEBI:15377"/>
        <dbReference type="ChEBI" id="CHEBI:15378"/>
        <dbReference type="ChEBI" id="CHEBI:43474"/>
        <dbReference type="ChEBI" id="CHEBI:57279"/>
        <dbReference type="ChEBI" id="CHEBI:57792"/>
        <dbReference type="ChEBI" id="CHEBI:58589"/>
        <dbReference type="EC" id="2.6.99.2"/>
    </reaction>
</comment>
<comment type="pathway">
    <text evidence="1">Cofactor biosynthesis; pyridoxine 5'-phosphate biosynthesis; pyridoxine 5'-phosphate from D-erythrose 4-phosphate: step 5/5.</text>
</comment>
<comment type="subunit">
    <text evidence="1">Homooctamer; tetramer of dimers.</text>
</comment>
<comment type="subcellular location">
    <subcellularLocation>
        <location evidence="1">Cytoplasm</location>
    </subcellularLocation>
</comment>
<comment type="similarity">
    <text evidence="1">Belongs to the PNP synthase family.</text>
</comment>
<feature type="chain" id="PRO_0000231794" description="Pyridoxine 5'-phosphate synthase">
    <location>
        <begin position="1"/>
        <end position="257"/>
    </location>
</feature>
<feature type="active site" description="Proton acceptor" evidence="1">
    <location>
        <position position="52"/>
    </location>
</feature>
<feature type="active site" description="Proton acceptor" evidence="1">
    <location>
        <position position="79"/>
    </location>
</feature>
<feature type="active site" description="Proton donor" evidence="1">
    <location>
        <position position="200"/>
    </location>
</feature>
<feature type="binding site" evidence="1">
    <location>
        <position position="16"/>
    </location>
    <ligand>
        <name>3-amino-2-oxopropyl phosphate</name>
        <dbReference type="ChEBI" id="CHEBI:57279"/>
    </ligand>
</feature>
<feature type="binding site" evidence="1">
    <location>
        <begin position="18"/>
        <end position="19"/>
    </location>
    <ligand>
        <name>1-deoxy-D-xylulose 5-phosphate</name>
        <dbReference type="ChEBI" id="CHEBI:57792"/>
    </ligand>
</feature>
<feature type="binding site" evidence="1">
    <location>
        <position position="27"/>
    </location>
    <ligand>
        <name>3-amino-2-oxopropyl phosphate</name>
        <dbReference type="ChEBI" id="CHEBI:57279"/>
    </ligand>
</feature>
<feature type="binding site" evidence="1">
    <location>
        <position position="54"/>
    </location>
    <ligand>
        <name>1-deoxy-D-xylulose 5-phosphate</name>
        <dbReference type="ChEBI" id="CHEBI:57792"/>
    </ligand>
</feature>
<feature type="binding site" evidence="1">
    <location>
        <position position="59"/>
    </location>
    <ligand>
        <name>1-deoxy-D-xylulose 5-phosphate</name>
        <dbReference type="ChEBI" id="CHEBI:57792"/>
    </ligand>
</feature>
<feature type="binding site" evidence="1">
    <location>
        <position position="109"/>
    </location>
    <ligand>
        <name>1-deoxy-D-xylulose 5-phosphate</name>
        <dbReference type="ChEBI" id="CHEBI:57792"/>
    </ligand>
</feature>
<feature type="binding site" evidence="1">
    <location>
        <position position="201"/>
    </location>
    <ligand>
        <name>3-amino-2-oxopropyl phosphate</name>
        <dbReference type="ChEBI" id="CHEBI:57279"/>
    </ligand>
</feature>
<feature type="binding site" evidence="1">
    <location>
        <begin position="222"/>
        <end position="223"/>
    </location>
    <ligand>
        <name>3-amino-2-oxopropyl phosphate</name>
        <dbReference type="ChEBI" id="CHEBI:57279"/>
    </ligand>
</feature>
<feature type="site" description="Transition state stabilizer" evidence="1">
    <location>
        <position position="160"/>
    </location>
</feature>
<feature type="helix" evidence="2">
    <location>
        <begin position="8"/>
        <end position="10"/>
    </location>
</feature>
<feature type="strand" evidence="2">
    <location>
        <begin position="11"/>
        <end position="16"/>
    </location>
</feature>
<feature type="helix" evidence="2">
    <location>
        <begin position="18"/>
        <end position="27"/>
    </location>
</feature>
<feature type="strand" evidence="2">
    <location>
        <begin position="28"/>
        <end position="30"/>
    </location>
</feature>
<feature type="helix" evidence="2">
    <location>
        <begin position="34"/>
        <end position="43"/>
    </location>
</feature>
<feature type="strand" evidence="2">
    <location>
        <begin position="47"/>
        <end position="52"/>
    </location>
</feature>
<feature type="strand" evidence="2">
    <location>
        <begin position="58"/>
        <end position="60"/>
    </location>
</feature>
<feature type="helix" evidence="2">
    <location>
        <begin position="62"/>
        <end position="71"/>
    </location>
</feature>
<feature type="strand" evidence="2">
    <location>
        <begin position="76"/>
        <end position="80"/>
    </location>
</feature>
<feature type="helix" evidence="2">
    <location>
        <begin position="84"/>
        <end position="93"/>
    </location>
</feature>
<feature type="strand" evidence="2">
    <location>
        <begin position="96"/>
        <end position="100"/>
    </location>
</feature>
<feature type="helix" evidence="2">
    <location>
        <begin position="105"/>
        <end position="107"/>
    </location>
</feature>
<feature type="strand" evidence="2">
    <location>
        <begin position="110"/>
        <end position="114"/>
    </location>
</feature>
<feature type="turn" evidence="2">
    <location>
        <begin position="116"/>
        <end position="119"/>
    </location>
</feature>
<feature type="helix" evidence="2">
    <location>
        <begin position="120"/>
        <end position="132"/>
    </location>
</feature>
<feature type="strand" evidence="2">
    <location>
        <begin position="136"/>
        <end position="141"/>
    </location>
</feature>
<feature type="helix" evidence="2">
    <location>
        <begin position="145"/>
        <end position="154"/>
    </location>
</feature>
<feature type="strand" evidence="2">
    <location>
        <begin position="157"/>
        <end position="161"/>
    </location>
</feature>
<feature type="helix" evidence="2">
    <location>
        <begin position="164"/>
        <end position="167"/>
    </location>
</feature>
<feature type="helix" evidence="2">
    <location>
        <begin position="172"/>
        <end position="191"/>
    </location>
</feature>
<feature type="strand" evidence="2">
    <location>
        <begin position="195"/>
        <end position="198"/>
    </location>
</feature>
<feature type="turn" evidence="2">
    <location>
        <begin position="204"/>
        <end position="206"/>
    </location>
</feature>
<feature type="helix" evidence="2">
    <location>
        <begin position="207"/>
        <end position="211"/>
    </location>
</feature>
<feature type="strand" evidence="2">
    <location>
        <begin position="216"/>
        <end position="221"/>
    </location>
</feature>
<feature type="helix" evidence="2">
    <location>
        <begin position="223"/>
        <end position="232"/>
    </location>
</feature>
<feature type="helix" evidence="2">
    <location>
        <begin position="234"/>
        <end position="253"/>
    </location>
</feature>
<reference key="1">
    <citation type="journal article" date="2010" name="Genome Biol. Evol.">
        <title>Continuing evolution of Burkholderia mallei through genome reduction and large-scale rearrangements.</title>
        <authorList>
            <person name="Losada L."/>
            <person name="Ronning C.M."/>
            <person name="DeShazer D."/>
            <person name="Woods D."/>
            <person name="Fedorova N."/>
            <person name="Kim H.S."/>
            <person name="Shabalina S.A."/>
            <person name="Pearson T.R."/>
            <person name="Brinkac L."/>
            <person name="Tan P."/>
            <person name="Nandi T."/>
            <person name="Crabtree J."/>
            <person name="Badger J."/>
            <person name="Beckstrom-Sternberg S."/>
            <person name="Saqib M."/>
            <person name="Schutzer S.E."/>
            <person name="Keim P."/>
            <person name="Nierman W.C."/>
        </authorList>
    </citation>
    <scope>NUCLEOTIDE SEQUENCE [LARGE SCALE GENOMIC DNA]</scope>
    <source>
        <strain>1710b</strain>
    </source>
</reference>